<dbReference type="GO" id="GO:0050832">
    <property type="term" value="P:defense response to fungus"/>
    <property type="evidence" value="ECO:0000314"/>
    <property type="project" value="UniProtKB"/>
</dbReference>
<dbReference type="GO" id="GO:0031640">
    <property type="term" value="P:killing of cells of another organism"/>
    <property type="evidence" value="ECO:0007669"/>
    <property type="project" value="UniProtKB-KW"/>
</dbReference>
<organism>
    <name type="scientific">Passiflora edulis</name>
    <name type="common">Passion fruit</name>
    <dbReference type="NCBI Taxonomy" id="78168"/>
    <lineage>
        <taxon>Eukaryota</taxon>
        <taxon>Viridiplantae</taxon>
        <taxon>Streptophyta</taxon>
        <taxon>Embryophyta</taxon>
        <taxon>Tracheophyta</taxon>
        <taxon>Spermatophyta</taxon>
        <taxon>Magnoliopsida</taxon>
        <taxon>eudicotyledons</taxon>
        <taxon>Gunneridae</taxon>
        <taxon>Pentapetalae</taxon>
        <taxon>rosids</taxon>
        <taxon>fabids</taxon>
        <taxon>Malpighiales</taxon>
        <taxon>Passifloraceae</taxon>
        <taxon>Passiflora</taxon>
    </lineage>
</organism>
<keyword id="KW-0929">Antimicrobial</keyword>
<keyword id="KW-0903">Direct protein sequencing</keyword>
<keyword id="KW-0295">Fungicide</keyword>
<keyword id="KW-0611">Plant defense</keyword>
<feature type="chain" id="PRO_0000247742" description="Antifungal protein 1">
    <location>
        <begin position="1"/>
        <end position="25" status="greater than"/>
    </location>
</feature>
<feature type="region of interest" description="Disordered" evidence="1">
    <location>
        <begin position="1"/>
        <end position="25"/>
    </location>
</feature>
<feature type="compositionally biased region" description="Basic and acidic residues" evidence="1">
    <location>
        <begin position="14"/>
        <end position="25"/>
    </location>
</feature>
<feature type="non-terminal residue" evidence="3">
    <location>
        <position position="25"/>
    </location>
</feature>
<proteinExistence type="evidence at protein level"/>
<protein>
    <recommendedName>
        <fullName>Antifungal protein 1</fullName>
    </recommendedName>
    <alternativeName>
        <fullName>Pf-AFP1</fullName>
    </alternativeName>
</protein>
<evidence type="ECO:0000256" key="1">
    <source>
        <dbReference type="SAM" id="MobiDB-lite"/>
    </source>
</evidence>
<evidence type="ECO:0000269" key="2">
    <source>
    </source>
</evidence>
<evidence type="ECO:0000303" key="3">
    <source>
    </source>
</evidence>
<evidence type="ECO:0000305" key="4"/>
<accession>P84884</accession>
<sequence length="25" mass="3000">QSERFEQQMQGQDFSHDERFLSQAA</sequence>
<name>AFP1_PASED</name>
<comment type="function">
    <text evidence="2">Has strong antifungal activity against T.harzianum, F.oxysporum and A.fumigatus with IC(50) values of 32 ug/ml, 34 ug/ml and 40 ug/ml, restectively. Lacks antifungal activity against R.solani, P.brasiliensis and C.albicans.</text>
</comment>
<comment type="tissue specificity">
    <text evidence="2">Expressed in seed (at protein level). Not detected in pulp, stems and leaves.</text>
</comment>
<comment type="developmental stage">
    <text evidence="2">Expressed in dormant seed.</text>
</comment>
<comment type="similarity">
    <text evidence="2">Belongs to the 2S seed storage albumins family.</text>
</comment>
<reference evidence="4" key="1">
    <citation type="journal article" date="2006" name="Biochim. Biophys. Acta">
        <title>An antifungal peptide from passion fruit (Passiflora edulis) seeds with similarities to 2S albumin proteins.</title>
        <authorList>
            <person name="Pelegrini P.B."/>
            <person name="Noronha E.F."/>
            <person name="Muniz M.A.R."/>
            <person name="Vasconcelos I.M."/>
            <person name="Chiarello M.D."/>
            <person name="Oliveira J.T."/>
            <person name="Franco O.L."/>
        </authorList>
    </citation>
    <scope>PROTEIN SEQUENCE</scope>
    <scope>FUNCTION</scope>
    <scope>TISSUE SPECIFICITY</scope>
    <scope>DEVELOPMENTAL STAGE</scope>
    <source>
        <tissue evidence="2">Seed</tissue>
    </source>
</reference>